<proteinExistence type="inferred from homology"/>
<organism>
    <name type="scientific">Streptococcus mutans serotype c (strain ATCC 700610 / UA159)</name>
    <dbReference type="NCBI Taxonomy" id="210007"/>
    <lineage>
        <taxon>Bacteria</taxon>
        <taxon>Bacillati</taxon>
        <taxon>Bacillota</taxon>
        <taxon>Bacilli</taxon>
        <taxon>Lactobacillales</taxon>
        <taxon>Streptococcaceae</taxon>
        <taxon>Streptococcus</taxon>
    </lineage>
</organism>
<dbReference type="EC" id="6.3.2.7" evidence="1"/>
<dbReference type="EMBL" id="AE014133">
    <property type="protein sequence ID" value="AAN59316.1"/>
    <property type="molecule type" value="Genomic_DNA"/>
</dbReference>
<dbReference type="RefSeq" id="NP_722010.1">
    <property type="nucleotide sequence ID" value="NC_004350.2"/>
</dbReference>
<dbReference type="RefSeq" id="WP_002262594.1">
    <property type="nucleotide sequence ID" value="NC_004350.2"/>
</dbReference>
<dbReference type="SMR" id="Q8DST2"/>
<dbReference type="STRING" id="210007.SMU_1677"/>
<dbReference type="DNASU" id="1028914"/>
<dbReference type="KEGG" id="smu:SMU_1677"/>
<dbReference type="PATRIC" id="fig|210007.7.peg.1499"/>
<dbReference type="eggNOG" id="COG0769">
    <property type="taxonomic scope" value="Bacteria"/>
</dbReference>
<dbReference type="HOGENOM" id="CLU_022291_4_2_9"/>
<dbReference type="OrthoDB" id="9800958at2"/>
<dbReference type="PhylomeDB" id="Q8DST2"/>
<dbReference type="UniPathway" id="UPA00219"/>
<dbReference type="Proteomes" id="UP000002512">
    <property type="component" value="Chromosome"/>
</dbReference>
<dbReference type="GO" id="GO:0005737">
    <property type="term" value="C:cytoplasm"/>
    <property type="evidence" value="ECO:0007669"/>
    <property type="project" value="UniProtKB-SubCell"/>
</dbReference>
<dbReference type="GO" id="GO:0005524">
    <property type="term" value="F:ATP binding"/>
    <property type="evidence" value="ECO:0007669"/>
    <property type="project" value="UniProtKB-UniRule"/>
</dbReference>
<dbReference type="GO" id="GO:0000287">
    <property type="term" value="F:magnesium ion binding"/>
    <property type="evidence" value="ECO:0007669"/>
    <property type="project" value="UniProtKB-UniRule"/>
</dbReference>
<dbReference type="GO" id="GO:0047482">
    <property type="term" value="F:UDP-N-acetylmuramoyl-L-alanyl-D-glutamate-L-lysine ligase activity"/>
    <property type="evidence" value="ECO:0007669"/>
    <property type="project" value="UniProtKB-UniRule"/>
</dbReference>
<dbReference type="GO" id="GO:0051301">
    <property type="term" value="P:cell division"/>
    <property type="evidence" value="ECO:0007669"/>
    <property type="project" value="UniProtKB-KW"/>
</dbReference>
<dbReference type="GO" id="GO:0071555">
    <property type="term" value="P:cell wall organization"/>
    <property type="evidence" value="ECO:0007669"/>
    <property type="project" value="UniProtKB-KW"/>
</dbReference>
<dbReference type="GO" id="GO:0009252">
    <property type="term" value="P:peptidoglycan biosynthetic process"/>
    <property type="evidence" value="ECO:0007669"/>
    <property type="project" value="UniProtKB-UniRule"/>
</dbReference>
<dbReference type="GO" id="GO:0008360">
    <property type="term" value="P:regulation of cell shape"/>
    <property type="evidence" value="ECO:0007669"/>
    <property type="project" value="UniProtKB-KW"/>
</dbReference>
<dbReference type="Gene3D" id="3.90.190.20">
    <property type="entry name" value="Mur ligase, C-terminal domain"/>
    <property type="match status" value="1"/>
</dbReference>
<dbReference type="Gene3D" id="3.40.1190.10">
    <property type="entry name" value="Mur-like, catalytic domain"/>
    <property type="match status" value="1"/>
</dbReference>
<dbReference type="Gene3D" id="3.40.1390.10">
    <property type="entry name" value="MurE/MurF, N-terminal domain"/>
    <property type="match status" value="1"/>
</dbReference>
<dbReference type="HAMAP" id="MF_00208">
    <property type="entry name" value="MurE"/>
    <property type="match status" value="1"/>
</dbReference>
<dbReference type="InterPro" id="IPR036565">
    <property type="entry name" value="Mur-like_cat_sf"/>
</dbReference>
<dbReference type="InterPro" id="IPR004101">
    <property type="entry name" value="Mur_ligase_C"/>
</dbReference>
<dbReference type="InterPro" id="IPR036615">
    <property type="entry name" value="Mur_ligase_C_dom_sf"/>
</dbReference>
<dbReference type="InterPro" id="IPR013221">
    <property type="entry name" value="Mur_ligase_cen"/>
</dbReference>
<dbReference type="InterPro" id="IPR035911">
    <property type="entry name" value="MurE/MurF_N"/>
</dbReference>
<dbReference type="InterPro" id="IPR005761">
    <property type="entry name" value="UDP-N-AcMur-Glu-dNH2Pim_ligase"/>
</dbReference>
<dbReference type="NCBIfam" id="TIGR01085">
    <property type="entry name" value="murE"/>
    <property type="match status" value="1"/>
</dbReference>
<dbReference type="NCBIfam" id="NF010628">
    <property type="entry name" value="PRK14022.1"/>
    <property type="match status" value="1"/>
</dbReference>
<dbReference type="PANTHER" id="PTHR23135">
    <property type="entry name" value="MUR LIGASE FAMILY MEMBER"/>
    <property type="match status" value="1"/>
</dbReference>
<dbReference type="PANTHER" id="PTHR23135:SF4">
    <property type="entry name" value="UDP-N-ACETYLMURAMOYL-L-ALANYL-D-GLUTAMATE--2,6-DIAMINOPIMELATE LIGASE MURE HOMOLOG, CHLOROPLASTIC"/>
    <property type="match status" value="1"/>
</dbReference>
<dbReference type="Pfam" id="PF02875">
    <property type="entry name" value="Mur_ligase_C"/>
    <property type="match status" value="1"/>
</dbReference>
<dbReference type="Pfam" id="PF08245">
    <property type="entry name" value="Mur_ligase_M"/>
    <property type="match status" value="1"/>
</dbReference>
<dbReference type="SUPFAM" id="SSF53623">
    <property type="entry name" value="MurD-like peptide ligases, catalytic domain"/>
    <property type="match status" value="1"/>
</dbReference>
<dbReference type="SUPFAM" id="SSF53244">
    <property type="entry name" value="MurD-like peptide ligases, peptide-binding domain"/>
    <property type="match status" value="1"/>
</dbReference>
<dbReference type="SUPFAM" id="SSF63418">
    <property type="entry name" value="MurE/MurF N-terminal domain"/>
    <property type="match status" value="1"/>
</dbReference>
<keyword id="KW-0067">ATP-binding</keyword>
<keyword id="KW-0131">Cell cycle</keyword>
<keyword id="KW-0132">Cell division</keyword>
<keyword id="KW-0133">Cell shape</keyword>
<keyword id="KW-0961">Cell wall biogenesis/degradation</keyword>
<keyword id="KW-0963">Cytoplasm</keyword>
<keyword id="KW-0436">Ligase</keyword>
<keyword id="KW-0547">Nucleotide-binding</keyword>
<keyword id="KW-0573">Peptidoglycan synthesis</keyword>
<keyword id="KW-1185">Reference proteome</keyword>
<comment type="function">
    <text evidence="1">Catalyzes the addition of L-lysine to the nucleotide precursor UDP-N-acetylmuramoyl-L-alanyl-D-glutamate (UMAG) in the biosynthesis of bacterial cell-wall peptidoglycan.</text>
</comment>
<comment type="catalytic activity">
    <reaction evidence="1">
        <text>UDP-N-acetyl-alpha-D-muramoyl-L-alanyl-D-glutamate + L-lysine + ATP = UDP-N-acetyl-alpha-D-muramoyl-L-alanyl-gamma-D-glutamyl-L-lysine + ADP + phosphate + H(+)</text>
        <dbReference type="Rhea" id="RHEA:17969"/>
        <dbReference type="ChEBI" id="CHEBI:15378"/>
        <dbReference type="ChEBI" id="CHEBI:30616"/>
        <dbReference type="ChEBI" id="CHEBI:32551"/>
        <dbReference type="ChEBI" id="CHEBI:43474"/>
        <dbReference type="ChEBI" id="CHEBI:83900"/>
        <dbReference type="ChEBI" id="CHEBI:83903"/>
        <dbReference type="ChEBI" id="CHEBI:456216"/>
        <dbReference type="EC" id="6.3.2.7"/>
    </reaction>
</comment>
<comment type="pathway">
    <text evidence="1">Cell wall biogenesis; peptidoglycan biosynthesis.</text>
</comment>
<comment type="subcellular location">
    <subcellularLocation>
        <location evidence="1">Cytoplasm</location>
    </subcellularLocation>
</comment>
<comment type="PTM">
    <text evidence="1">Carboxylation is probably crucial for Mg(2+) binding and, consequently, for the gamma-phosphate positioning of ATP.</text>
</comment>
<comment type="similarity">
    <text evidence="1">Belongs to the MurCDEF family. MurE subfamily.</text>
</comment>
<feature type="chain" id="PRO_0000101952" description="UDP-N-acetylmuramoyl-L-alanyl-D-glutamate--L-lysine ligase">
    <location>
        <begin position="1"/>
        <end position="483"/>
    </location>
</feature>
<feature type="short sequence motif" description="L-lysine recognition motif">
    <location>
        <begin position="406"/>
        <end position="409"/>
    </location>
</feature>
<feature type="binding site" evidence="1">
    <location>
        <position position="44"/>
    </location>
    <ligand>
        <name>UDP-N-acetyl-alpha-D-muramoyl-L-alanyl-D-glutamate</name>
        <dbReference type="ChEBI" id="CHEBI:83900"/>
    </ligand>
</feature>
<feature type="binding site" evidence="1">
    <location>
        <begin position="120"/>
        <end position="126"/>
    </location>
    <ligand>
        <name>ATP</name>
        <dbReference type="ChEBI" id="CHEBI:30616"/>
    </ligand>
</feature>
<feature type="binding site" evidence="1">
    <location>
        <begin position="162"/>
        <end position="163"/>
    </location>
    <ligand>
        <name>UDP-N-acetyl-alpha-D-muramoyl-L-alanyl-D-glutamate</name>
        <dbReference type="ChEBI" id="CHEBI:83900"/>
    </ligand>
</feature>
<feature type="binding site" evidence="1">
    <location>
        <position position="189"/>
    </location>
    <ligand>
        <name>UDP-N-acetyl-alpha-D-muramoyl-L-alanyl-D-glutamate</name>
        <dbReference type="ChEBI" id="CHEBI:83900"/>
    </ligand>
</feature>
<feature type="binding site" evidence="1">
    <location>
        <position position="197"/>
    </location>
    <ligand>
        <name>UDP-N-acetyl-alpha-D-muramoyl-L-alanyl-D-glutamate</name>
        <dbReference type="ChEBI" id="CHEBI:83900"/>
    </ligand>
</feature>
<feature type="modified residue" description="N6-carboxylysine" evidence="1">
    <location>
        <position position="231"/>
    </location>
</feature>
<sequence>MITIETVLTILKNNANFREIIDGKHYQYKYSNPEVAFHHISYDSRDIKASTLFFVKGATFKKEFLEKAIESGLTFYVAEKDYQVGIPLILVNNIKNAMCLIAKEFYDNPQDKLKTLAFTGTKGKTTAAYFAYHILKQGYRPAMISTMNTTLDGKTFFKSKLTTPESLDLFKMMAQAVANGMTHLIMEVSSQAYLVGRVYGLTFDVGVFLNISPDHIGPIEHPTFEDYFYHKRLLLKHSRYVIVNSQMNHFALIKEQVADQPHDFYGKYSDNQIINSKAFSFDLTGKLAGHYDIQLTGSFNQENAVAAALACLQLGASQTDIQKGIVQTTVPGRMEVLIQKNGAKVFVDYAHNGDSLEKLLSVVEEHQKGTLILILGAPGNKGESRRADFGYVINAHPELQVILTADDPNNEDPQLISQEIAHHIKRPVNIIVDRKQAIQKAMSLTQSENDAVIIAGKGADAFQIIKGKRTAYAGDIEVARKYL</sequence>
<name>MURE_STRMU</name>
<gene>
    <name evidence="1" type="primary">murE</name>
    <name type="ordered locus">SMU_1677</name>
</gene>
<evidence type="ECO:0000255" key="1">
    <source>
        <dbReference type="HAMAP-Rule" id="MF_00208"/>
    </source>
</evidence>
<reference key="1">
    <citation type="journal article" date="2002" name="Proc. Natl. Acad. Sci. U.S.A.">
        <title>Genome sequence of Streptococcus mutans UA159, a cariogenic dental pathogen.</title>
        <authorList>
            <person name="Ajdic D.J."/>
            <person name="McShan W.M."/>
            <person name="McLaughlin R.E."/>
            <person name="Savic G."/>
            <person name="Chang J."/>
            <person name="Carson M.B."/>
            <person name="Primeaux C."/>
            <person name="Tian R."/>
            <person name="Kenton S."/>
            <person name="Jia H.G."/>
            <person name="Lin S.P."/>
            <person name="Qian Y."/>
            <person name="Li S."/>
            <person name="Zhu H."/>
            <person name="Najar F.Z."/>
            <person name="Lai H."/>
            <person name="White J."/>
            <person name="Roe B.A."/>
            <person name="Ferretti J.J."/>
        </authorList>
    </citation>
    <scope>NUCLEOTIDE SEQUENCE [LARGE SCALE GENOMIC DNA]</scope>
    <source>
        <strain>ATCC 700610 / UA159</strain>
    </source>
</reference>
<accession>Q8DST2</accession>
<protein>
    <recommendedName>
        <fullName evidence="1">UDP-N-acetylmuramoyl-L-alanyl-D-glutamate--L-lysine ligase</fullName>
        <ecNumber evidence="1">6.3.2.7</ecNumber>
    </recommendedName>
    <alternativeName>
        <fullName evidence="1">L-lysine-adding enzyme</fullName>
    </alternativeName>
    <alternativeName>
        <fullName evidence="1">UDP-MurNAc-L-Ala-D-Glu:L-Lys ligase</fullName>
    </alternativeName>
    <alternativeName>
        <fullName evidence="1">UDP-MurNAc-tripeptide synthetase</fullName>
    </alternativeName>
    <alternativeName>
        <fullName evidence="1">UDP-N-acetylmuramyl-tripeptide synthetase</fullName>
    </alternativeName>
</protein>